<accession>Q9CJR6</accession>
<evidence type="ECO:0000255" key="1">
    <source>
        <dbReference type="HAMAP-Rule" id="MF_02071"/>
    </source>
</evidence>
<proteinExistence type="inferred from homology"/>
<comment type="function">
    <text evidence="1">Lytic transglycosylase with a strong preference for naked glycan strands that lack stem peptides.</text>
</comment>
<comment type="similarity">
    <text evidence="1">Belongs to the RlpA family.</text>
</comment>
<organism>
    <name type="scientific">Pasteurella multocida (strain Pm70)</name>
    <dbReference type="NCBI Taxonomy" id="272843"/>
    <lineage>
        <taxon>Bacteria</taxon>
        <taxon>Pseudomonadati</taxon>
        <taxon>Pseudomonadota</taxon>
        <taxon>Gammaproteobacteria</taxon>
        <taxon>Pasteurellales</taxon>
        <taxon>Pasteurellaceae</taxon>
        <taxon>Pasteurella</taxon>
    </lineage>
</organism>
<sequence length="294" mass="33049">MKQKIFQILTALCCIFYVMSAQAIDAKKLYGLQGPKLIYQAPVTKSHHYVVKGVSYRTQTSKEASGYARDGIASFYHKKFNGRKTASGQIYNENLYTAAHKTLPLNSYVLVTNLRNQRKVIVRINDRGPFVKGRIIDLSRAAAREIGLIGSGVGHVRVELIQLDRQGRISGAASATLAKLAKNQEAVNMLLQGEDTVELTQHTEEKTVKAATTKPEKYTTVYKIRILNLDSKKQAEKLISKLGREDIRADITVNQDKFDIYFGPFSDKSQVNDVKAQLRKLNYSKPLIVYTFDD</sequence>
<feature type="signal peptide" evidence="1">
    <location>
        <begin position="1"/>
        <end position="23"/>
    </location>
</feature>
<feature type="chain" id="PRO_0000030808" description="Endolytic peptidoglycan transglycosylase RlpA" evidence="1">
    <location>
        <begin position="24"/>
        <end position="294"/>
    </location>
</feature>
<feature type="domain" description="SPOR" evidence="1">
    <location>
        <begin position="216"/>
        <end position="291"/>
    </location>
</feature>
<gene>
    <name evidence="1" type="primary">rlpA</name>
    <name type="ordered locus">PM1926</name>
</gene>
<name>RLPA_PASMU</name>
<dbReference type="EC" id="4.2.2.-" evidence="1"/>
<dbReference type="EMBL" id="AE004439">
    <property type="protein sequence ID" value="AAK04010.1"/>
    <property type="molecule type" value="Genomic_DNA"/>
</dbReference>
<dbReference type="SMR" id="Q9CJR6"/>
<dbReference type="STRING" id="272843.PM1926"/>
<dbReference type="EnsemblBacteria" id="AAK04010">
    <property type="protein sequence ID" value="AAK04010"/>
    <property type="gene ID" value="PM1926"/>
</dbReference>
<dbReference type="KEGG" id="pmu:PM1926"/>
<dbReference type="HOGENOM" id="CLU_042923_3_1_6"/>
<dbReference type="Proteomes" id="UP000000809">
    <property type="component" value="Chromosome"/>
</dbReference>
<dbReference type="GO" id="GO:0009279">
    <property type="term" value="C:cell outer membrane"/>
    <property type="evidence" value="ECO:0007669"/>
    <property type="project" value="TreeGrafter"/>
</dbReference>
<dbReference type="GO" id="GO:0008932">
    <property type="term" value="F:lytic endotransglycosylase activity"/>
    <property type="evidence" value="ECO:0007669"/>
    <property type="project" value="UniProtKB-UniRule"/>
</dbReference>
<dbReference type="GO" id="GO:0042834">
    <property type="term" value="F:peptidoglycan binding"/>
    <property type="evidence" value="ECO:0007669"/>
    <property type="project" value="InterPro"/>
</dbReference>
<dbReference type="GO" id="GO:0071555">
    <property type="term" value="P:cell wall organization"/>
    <property type="evidence" value="ECO:0007669"/>
    <property type="project" value="UniProtKB-KW"/>
</dbReference>
<dbReference type="GO" id="GO:0000270">
    <property type="term" value="P:peptidoglycan metabolic process"/>
    <property type="evidence" value="ECO:0007669"/>
    <property type="project" value="UniProtKB-UniRule"/>
</dbReference>
<dbReference type="CDD" id="cd22268">
    <property type="entry name" value="DPBB_RlpA-like"/>
    <property type="match status" value="1"/>
</dbReference>
<dbReference type="Gene3D" id="2.40.40.10">
    <property type="entry name" value="RlpA-like domain"/>
    <property type="match status" value="1"/>
</dbReference>
<dbReference type="Gene3D" id="3.30.70.1070">
    <property type="entry name" value="Sporulation related repeat"/>
    <property type="match status" value="1"/>
</dbReference>
<dbReference type="HAMAP" id="MF_02071">
    <property type="entry name" value="RlpA"/>
    <property type="match status" value="1"/>
</dbReference>
<dbReference type="InterPro" id="IPR034718">
    <property type="entry name" value="RlpA"/>
</dbReference>
<dbReference type="InterPro" id="IPR009009">
    <property type="entry name" value="RlpA-like_DPBB"/>
</dbReference>
<dbReference type="InterPro" id="IPR036908">
    <property type="entry name" value="RlpA-like_sf"/>
</dbReference>
<dbReference type="InterPro" id="IPR012997">
    <property type="entry name" value="RplA"/>
</dbReference>
<dbReference type="InterPro" id="IPR007730">
    <property type="entry name" value="SPOR-like_dom"/>
</dbReference>
<dbReference type="InterPro" id="IPR036680">
    <property type="entry name" value="SPOR-like_sf"/>
</dbReference>
<dbReference type="NCBIfam" id="TIGR00413">
    <property type="entry name" value="rlpA"/>
    <property type="match status" value="1"/>
</dbReference>
<dbReference type="PANTHER" id="PTHR34183">
    <property type="entry name" value="ENDOLYTIC PEPTIDOGLYCAN TRANSGLYCOSYLASE RLPA"/>
    <property type="match status" value="1"/>
</dbReference>
<dbReference type="PANTHER" id="PTHR34183:SF1">
    <property type="entry name" value="ENDOLYTIC PEPTIDOGLYCAN TRANSGLYCOSYLASE RLPA"/>
    <property type="match status" value="1"/>
</dbReference>
<dbReference type="Pfam" id="PF03330">
    <property type="entry name" value="DPBB_1"/>
    <property type="match status" value="1"/>
</dbReference>
<dbReference type="Pfam" id="PF05036">
    <property type="entry name" value="SPOR"/>
    <property type="match status" value="1"/>
</dbReference>
<dbReference type="SUPFAM" id="SSF50685">
    <property type="entry name" value="Barwin-like endoglucanases"/>
    <property type="match status" value="1"/>
</dbReference>
<dbReference type="SUPFAM" id="SSF110997">
    <property type="entry name" value="Sporulation related repeat"/>
    <property type="match status" value="1"/>
</dbReference>
<dbReference type="PROSITE" id="PS51724">
    <property type="entry name" value="SPOR"/>
    <property type="match status" value="1"/>
</dbReference>
<protein>
    <recommendedName>
        <fullName evidence="1">Endolytic peptidoglycan transglycosylase RlpA</fullName>
        <ecNumber evidence="1">4.2.2.-</ecNumber>
    </recommendedName>
</protein>
<reference key="1">
    <citation type="journal article" date="2001" name="Proc. Natl. Acad. Sci. U.S.A.">
        <title>Complete genomic sequence of Pasteurella multocida Pm70.</title>
        <authorList>
            <person name="May B.J."/>
            <person name="Zhang Q."/>
            <person name="Li L.L."/>
            <person name="Paustian M.L."/>
            <person name="Whittam T.S."/>
            <person name="Kapur V."/>
        </authorList>
    </citation>
    <scope>NUCLEOTIDE SEQUENCE [LARGE SCALE GENOMIC DNA]</scope>
    <source>
        <strain>Pm70</strain>
    </source>
</reference>
<keyword id="KW-0961">Cell wall biogenesis/degradation</keyword>
<keyword id="KW-0456">Lyase</keyword>
<keyword id="KW-1185">Reference proteome</keyword>
<keyword id="KW-0732">Signal</keyword>